<proteinExistence type="evidence at protein level"/>
<dbReference type="PIR" id="A68399">
    <property type="entry name" value="A68399"/>
</dbReference>
<dbReference type="PDB" id="1AWD">
    <property type="method" value="X-ray"/>
    <property type="resolution" value="1.40 A"/>
    <property type="chains" value="A=1-94"/>
</dbReference>
<dbReference type="PDBsum" id="1AWD"/>
<dbReference type="SMR" id="P56408"/>
<dbReference type="iPTMnet" id="P56408"/>
<dbReference type="EvolutionaryTrace" id="P56408"/>
<dbReference type="GO" id="GO:0009507">
    <property type="term" value="C:chloroplast"/>
    <property type="evidence" value="ECO:0007669"/>
    <property type="project" value="UniProtKB-SubCell"/>
</dbReference>
<dbReference type="GO" id="GO:0051537">
    <property type="term" value="F:2 iron, 2 sulfur cluster binding"/>
    <property type="evidence" value="ECO:0007669"/>
    <property type="project" value="UniProtKB-KW"/>
</dbReference>
<dbReference type="GO" id="GO:0009055">
    <property type="term" value="F:electron transfer activity"/>
    <property type="evidence" value="ECO:0007669"/>
    <property type="project" value="InterPro"/>
</dbReference>
<dbReference type="GO" id="GO:0046872">
    <property type="term" value="F:metal ion binding"/>
    <property type="evidence" value="ECO:0007669"/>
    <property type="project" value="UniProtKB-KW"/>
</dbReference>
<dbReference type="GO" id="GO:0022900">
    <property type="term" value="P:electron transport chain"/>
    <property type="evidence" value="ECO:0007669"/>
    <property type="project" value="InterPro"/>
</dbReference>
<dbReference type="CDD" id="cd00207">
    <property type="entry name" value="fer2"/>
    <property type="match status" value="1"/>
</dbReference>
<dbReference type="FunFam" id="3.10.20.30:FF:000014">
    <property type="entry name" value="Ferredoxin"/>
    <property type="match status" value="1"/>
</dbReference>
<dbReference type="Gene3D" id="3.10.20.30">
    <property type="match status" value="1"/>
</dbReference>
<dbReference type="InterPro" id="IPR036010">
    <property type="entry name" value="2Fe-2S_ferredoxin-like_sf"/>
</dbReference>
<dbReference type="InterPro" id="IPR001041">
    <property type="entry name" value="2Fe-2S_ferredoxin-type"/>
</dbReference>
<dbReference type="InterPro" id="IPR006058">
    <property type="entry name" value="2Fe2S_fd_BS"/>
</dbReference>
<dbReference type="InterPro" id="IPR012675">
    <property type="entry name" value="Beta-grasp_dom_sf"/>
</dbReference>
<dbReference type="InterPro" id="IPR010241">
    <property type="entry name" value="Fd_pln"/>
</dbReference>
<dbReference type="NCBIfam" id="TIGR02008">
    <property type="entry name" value="fdx_plant"/>
    <property type="match status" value="1"/>
</dbReference>
<dbReference type="PANTHER" id="PTHR43112">
    <property type="entry name" value="FERREDOXIN"/>
    <property type="match status" value="1"/>
</dbReference>
<dbReference type="PANTHER" id="PTHR43112:SF3">
    <property type="entry name" value="FERREDOXIN-2, CHLOROPLASTIC"/>
    <property type="match status" value="1"/>
</dbReference>
<dbReference type="Pfam" id="PF00111">
    <property type="entry name" value="Fer2"/>
    <property type="match status" value="1"/>
</dbReference>
<dbReference type="SUPFAM" id="SSF54292">
    <property type="entry name" value="2Fe-2S ferredoxin-like"/>
    <property type="match status" value="1"/>
</dbReference>
<dbReference type="PROSITE" id="PS00197">
    <property type="entry name" value="2FE2S_FER_1"/>
    <property type="match status" value="1"/>
</dbReference>
<dbReference type="PROSITE" id="PS51085">
    <property type="entry name" value="2FE2S_FER_2"/>
    <property type="match status" value="1"/>
</dbReference>
<accession>P56408</accession>
<reference key="1">
    <citation type="journal article" date="1999" name="Structure">
        <title>Crystal structure determination at 1.4-A resolution of ferredoxin from the green alga Chlorella fusca.</title>
        <authorList>
            <person name="Bes M.T."/>
            <person name="Parisini E."/>
            <person name="Inda L.A."/>
            <person name="Saraiva L.M."/>
            <person name="Peleato M.L."/>
            <person name="Sheldrick G.M."/>
        </authorList>
    </citation>
    <scope>PARTIAL PROTEIN SEQUENCE</scope>
    <scope>X-RAY CRYSTALLOGRAPHY (1.4 ANGSTROMS)</scope>
    <scope>PHOSPHORYLATION AT SER-9</scope>
</reference>
<keyword id="KW-0001">2Fe-2S</keyword>
<keyword id="KW-0002">3D-structure</keyword>
<keyword id="KW-0150">Chloroplast</keyword>
<keyword id="KW-0903">Direct protein sequencing</keyword>
<keyword id="KW-0249">Electron transport</keyword>
<keyword id="KW-0408">Iron</keyword>
<keyword id="KW-0411">Iron-sulfur</keyword>
<keyword id="KW-0479">Metal-binding</keyword>
<keyword id="KW-0597">Phosphoprotein</keyword>
<keyword id="KW-0934">Plastid</keyword>
<keyword id="KW-0813">Transport</keyword>
<evidence type="ECO:0000255" key="1">
    <source>
        <dbReference type="PROSITE-ProRule" id="PRU00465"/>
    </source>
</evidence>
<evidence type="ECO:0000269" key="2">
    <source>
    </source>
</evidence>
<evidence type="ECO:0000305" key="3"/>
<evidence type="ECO:0007829" key="4">
    <source>
        <dbReference type="PDB" id="1AWD"/>
    </source>
</evidence>
<comment type="function">
    <text>Ferredoxins are iron-sulfur proteins that transfer electrons in a wide variety of metabolic reactions.</text>
</comment>
<comment type="cofactor">
    <cofactor>
        <name>[2Fe-2S] cluster</name>
        <dbReference type="ChEBI" id="CHEBI:190135"/>
    </cofactor>
    <text>Binds 1 [2Fe-2S] cluster.</text>
</comment>
<comment type="subcellular location">
    <subcellularLocation>
        <location>Plastid</location>
        <location>Chloroplast</location>
    </subcellularLocation>
</comment>
<comment type="similarity">
    <text evidence="3">Belongs to the 2Fe2S plant-type ferredoxin family.</text>
</comment>
<protein>
    <recommendedName>
        <fullName>Ferredoxin</fullName>
    </recommendedName>
</protein>
<name>FER_SCEFU</name>
<feature type="chain" id="PRO_0000189314" description="Ferredoxin">
    <location>
        <begin position="1"/>
        <end position="94"/>
    </location>
</feature>
<feature type="domain" description="2Fe-2S ferredoxin-type" evidence="1">
    <location>
        <begin position="1"/>
        <end position="91"/>
    </location>
</feature>
<feature type="binding site" evidence="1 2">
    <location>
        <position position="37"/>
    </location>
    <ligand>
        <name>[2Fe-2S] cluster</name>
        <dbReference type="ChEBI" id="CHEBI:190135"/>
    </ligand>
</feature>
<feature type="binding site" evidence="1 2">
    <location>
        <position position="42"/>
    </location>
    <ligand>
        <name>[2Fe-2S] cluster</name>
        <dbReference type="ChEBI" id="CHEBI:190135"/>
    </ligand>
</feature>
<feature type="binding site" evidence="1 2">
    <location>
        <position position="45"/>
    </location>
    <ligand>
        <name>[2Fe-2S] cluster</name>
        <dbReference type="ChEBI" id="CHEBI:190135"/>
    </ligand>
</feature>
<feature type="binding site" evidence="1 2">
    <location>
        <position position="75"/>
    </location>
    <ligand>
        <name>[2Fe-2S] cluster</name>
        <dbReference type="ChEBI" id="CHEBI:190135"/>
    </ligand>
</feature>
<feature type="modified residue" description="Phosphoserine" evidence="2">
    <location>
        <position position="9"/>
    </location>
</feature>
<feature type="strand" evidence="4">
    <location>
        <begin position="2"/>
        <end position="7"/>
    </location>
</feature>
<feature type="strand" evidence="4">
    <location>
        <begin position="10"/>
        <end position="15"/>
    </location>
</feature>
<feature type="helix" evidence="4">
    <location>
        <begin position="22"/>
        <end position="28"/>
    </location>
</feature>
<feature type="strand" evidence="4">
    <location>
        <begin position="36"/>
        <end position="43"/>
    </location>
</feature>
<feature type="strand" evidence="4">
    <location>
        <begin position="46"/>
        <end position="52"/>
    </location>
</feature>
<feature type="helix" evidence="4">
    <location>
        <begin position="64"/>
        <end position="68"/>
    </location>
</feature>
<feature type="strand" evidence="4">
    <location>
        <begin position="71"/>
        <end position="73"/>
    </location>
</feature>
<feature type="helix" evidence="4">
    <location>
        <begin position="74"/>
        <end position="76"/>
    </location>
</feature>
<feature type="strand" evidence="4">
    <location>
        <begin position="78"/>
        <end position="81"/>
    </location>
</feature>
<feature type="strand" evidence="4">
    <location>
        <begin position="83"/>
        <end position="86"/>
    </location>
</feature>
<feature type="helix" evidence="4">
    <location>
        <begin position="90"/>
        <end position="93"/>
    </location>
</feature>
<organism>
    <name type="scientific">Scenedesmus fuscus</name>
    <name type="common">Green alga</name>
    <name type="synonym">Chlorella fusca</name>
    <dbReference type="NCBI Taxonomy" id="3073"/>
    <lineage>
        <taxon>Eukaryota</taxon>
        <taxon>Viridiplantae</taxon>
        <taxon>Chlorophyta</taxon>
        <taxon>core chlorophytes</taxon>
        <taxon>Chlorophyceae</taxon>
        <taxon>CS clade</taxon>
        <taxon>Sphaeropleales</taxon>
        <taxon>Scenedesmaceae</taxon>
        <taxon>Scenedesmus</taxon>
    </lineage>
</organism>
<sequence>YKVTLKTPSGEETIECPEDTYILDAAEEAGLDLPYSCRAGACSSCAGKVESGEVDQSDQSFLDDAQMGKGFVLTCVAYPTSDVTILTHQEAALY</sequence>